<gene>
    <name type="primary">ZNF740</name>
    <name type="synonym">TB7</name>
</gene>
<proteinExistence type="evidence at protein level"/>
<comment type="function">
    <text>May be involved in transcriptional regulation.</text>
</comment>
<comment type="interaction">
    <interactant intactId="EBI-2602428">
        <id>Q8NDX6</id>
    </interactant>
    <interactant intactId="EBI-748182">
        <id>Q8TC57</id>
        <label>M1AP</label>
    </interactant>
    <organismsDiffer>false</organismsDiffer>
    <experiments>3</experiments>
</comment>
<comment type="subcellular location">
    <subcellularLocation>
        <location evidence="3">Nucleus</location>
    </subcellularLocation>
</comment>
<comment type="similarity">
    <text evidence="3">Belongs to the krueppel C2H2-type zinc-finger protein family.</text>
</comment>
<name>ZN740_HUMAN</name>
<sequence length="193" mass="21857">MAQASLLACEGLAGVSLVPTAASKKMMLSQIASKQAENGERAGSPDVLRCSSQGHRKDSDKSRSRKDDDSLSEASHSKKTVKKVVVVEQNGSFQVKIPKNFVCEHCFGAFRSSYHLKRHILIHTGEKPFECDICDMRFIQKYHLERHKRVHSGEKPYQCERCHQCFSRTDRLLRHKRMCQGCQSKTSDGQFSL</sequence>
<evidence type="ECO:0000255" key="1">
    <source>
        <dbReference type="PROSITE-ProRule" id="PRU00042"/>
    </source>
</evidence>
<evidence type="ECO:0000256" key="2">
    <source>
        <dbReference type="SAM" id="MobiDB-lite"/>
    </source>
</evidence>
<evidence type="ECO:0000305" key="3"/>
<evidence type="ECO:0007744" key="4">
    <source>
    </source>
</evidence>
<evidence type="ECO:0007744" key="5">
    <source>
    </source>
</evidence>
<evidence type="ECO:0007744" key="6">
    <source>
    </source>
</evidence>
<evidence type="ECO:0007744" key="7">
    <source>
    </source>
</evidence>
<reference key="1">
    <citation type="thesis" date="1999" institute="University of Munich" country="Germany">
        <authorList>
            <person name="Feederle R."/>
        </authorList>
    </citation>
    <scope>NUCLEOTIDE SEQUENCE [GENOMIC DNA]</scope>
    <source>
        <tissue>Placenta</tissue>
    </source>
</reference>
<reference key="2">
    <citation type="journal article" date="2004" name="Nat. Genet.">
        <title>Complete sequencing and characterization of 21,243 full-length human cDNAs.</title>
        <authorList>
            <person name="Ota T."/>
            <person name="Suzuki Y."/>
            <person name="Nishikawa T."/>
            <person name="Otsuki T."/>
            <person name="Sugiyama T."/>
            <person name="Irie R."/>
            <person name="Wakamatsu A."/>
            <person name="Hayashi K."/>
            <person name="Sato H."/>
            <person name="Nagai K."/>
            <person name="Kimura K."/>
            <person name="Makita H."/>
            <person name="Sekine M."/>
            <person name="Obayashi M."/>
            <person name="Nishi T."/>
            <person name="Shibahara T."/>
            <person name="Tanaka T."/>
            <person name="Ishii S."/>
            <person name="Yamamoto J."/>
            <person name="Saito K."/>
            <person name="Kawai Y."/>
            <person name="Isono Y."/>
            <person name="Nakamura Y."/>
            <person name="Nagahari K."/>
            <person name="Murakami K."/>
            <person name="Yasuda T."/>
            <person name="Iwayanagi T."/>
            <person name="Wagatsuma M."/>
            <person name="Shiratori A."/>
            <person name="Sudo H."/>
            <person name="Hosoiri T."/>
            <person name="Kaku Y."/>
            <person name="Kodaira H."/>
            <person name="Kondo H."/>
            <person name="Sugawara M."/>
            <person name="Takahashi M."/>
            <person name="Kanda K."/>
            <person name="Yokoi T."/>
            <person name="Furuya T."/>
            <person name="Kikkawa E."/>
            <person name="Omura Y."/>
            <person name="Abe K."/>
            <person name="Kamihara K."/>
            <person name="Katsuta N."/>
            <person name="Sato K."/>
            <person name="Tanikawa M."/>
            <person name="Yamazaki M."/>
            <person name="Ninomiya K."/>
            <person name="Ishibashi T."/>
            <person name="Yamashita H."/>
            <person name="Murakawa K."/>
            <person name="Fujimori K."/>
            <person name="Tanai H."/>
            <person name="Kimata M."/>
            <person name="Watanabe M."/>
            <person name="Hiraoka S."/>
            <person name="Chiba Y."/>
            <person name="Ishida S."/>
            <person name="Ono Y."/>
            <person name="Takiguchi S."/>
            <person name="Watanabe S."/>
            <person name="Yosida M."/>
            <person name="Hotuta T."/>
            <person name="Kusano J."/>
            <person name="Kanehori K."/>
            <person name="Takahashi-Fujii A."/>
            <person name="Hara H."/>
            <person name="Tanase T.-O."/>
            <person name="Nomura Y."/>
            <person name="Togiya S."/>
            <person name="Komai F."/>
            <person name="Hara R."/>
            <person name="Takeuchi K."/>
            <person name="Arita M."/>
            <person name="Imose N."/>
            <person name="Musashino K."/>
            <person name="Yuuki H."/>
            <person name="Oshima A."/>
            <person name="Sasaki N."/>
            <person name="Aotsuka S."/>
            <person name="Yoshikawa Y."/>
            <person name="Matsunawa H."/>
            <person name="Ichihara T."/>
            <person name="Shiohata N."/>
            <person name="Sano S."/>
            <person name="Moriya S."/>
            <person name="Momiyama H."/>
            <person name="Satoh N."/>
            <person name="Takami S."/>
            <person name="Terashima Y."/>
            <person name="Suzuki O."/>
            <person name="Nakagawa S."/>
            <person name="Senoh A."/>
            <person name="Mizoguchi H."/>
            <person name="Goto Y."/>
            <person name="Shimizu F."/>
            <person name="Wakebe H."/>
            <person name="Hishigaki H."/>
            <person name="Watanabe T."/>
            <person name="Sugiyama A."/>
            <person name="Takemoto M."/>
            <person name="Kawakami B."/>
            <person name="Yamazaki M."/>
            <person name="Watanabe K."/>
            <person name="Kumagai A."/>
            <person name="Itakura S."/>
            <person name="Fukuzumi Y."/>
            <person name="Fujimori Y."/>
            <person name="Komiyama M."/>
            <person name="Tashiro H."/>
            <person name="Tanigami A."/>
            <person name="Fujiwara T."/>
            <person name="Ono T."/>
            <person name="Yamada K."/>
            <person name="Fujii Y."/>
            <person name="Ozaki K."/>
            <person name="Hirao M."/>
            <person name="Ohmori Y."/>
            <person name="Kawabata A."/>
            <person name="Hikiji T."/>
            <person name="Kobatake N."/>
            <person name="Inagaki H."/>
            <person name="Ikema Y."/>
            <person name="Okamoto S."/>
            <person name="Okitani R."/>
            <person name="Kawakami T."/>
            <person name="Noguchi S."/>
            <person name="Itoh T."/>
            <person name="Shigeta K."/>
            <person name="Senba T."/>
            <person name="Matsumura K."/>
            <person name="Nakajima Y."/>
            <person name="Mizuno T."/>
            <person name="Morinaga M."/>
            <person name="Sasaki M."/>
            <person name="Togashi T."/>
            <person name="Oyama M."/>
            <person name="Hata H."/>
            <person name="Watanabe M."/>
            <person name="Komatsu T."/>
            <person name="Mizushima-Sugano J."/>
            <person name="Satoh T."/>
            <person name="Shirai Y."/>
            <person name="Takahashi Y."/>
            <person name="Nakagawa K."/>
            <person name="Okumura K."/>
            <person name="Nagase T."/>
            <person name="Nomura N."/>
            <person name="Kikuchi H."/>
            <person name="Masuho Y."/>
            <person name="Yamashita R."/>
            <person name="Nakai K."/>
            <person name="Yada T."/>
            <person name="Nakamura Y."/>
            <person name="Ohara O."/>
            <person name="Isogai T."/>
            <person name="Sugano S."/>
        </authorList>
    </citation>
    <scope>NUCLEOTIDE SEQUENCE [LARGE SCALE MRNA]</scope>
    <source>
        <tissue>Liver</tissue>
    </source>
</reference>
<reference key="3">
    <citation type="submission" date="2005-07" db="EMBL/GenBank/DDBJ databases">
        <authorList>
            <person name="Mural R.J."/>
            <person name="Istrail S."/>
            <person name="Sutton G.G."/>
            <person name="Florea L."/>
            <person name="Halpern A.L."/>
            <person name="Mobarry C.M."/>
            <person name="Lippert R."/>
            <person name="Walenz B."/>
            <person name="Shatkay H."/>
            <person name="Dew I."/>
            <person name="Miller J.R."/>
            <person name="Flanigan M.J."/>
            <person name="Edwards N.J."/>
            <person name="Bolanos R."/>
            <person name="Fasulo D."/>
            <person name="Halldorsson B.V."/>
            <person name="Hannenhalli S."/>
            <person name="Turner R."/>
            <person name="Yooseph S."/>
            <person name="Lu F."/>
            <person name="Nusskern D.R."/>
            <person name="Shue B.C."/>
            <person name="Zheng X.H."/>
            <person name="Zhong F."/>
            <person name="Delcher A.L."/>
            <person name="Huson D.H."/>
            <person name="Kravitz S.A."/>
            <person name="Mouchard L."/>
            <person name="Reinert K."/>
            <person name="Remington K.A."/>
            <person name="Clark A.G."/>
            <person name="Waterman M.S."/>
            <person name="Eichler E.E."/>
            <person name="Adams M.D."/>
            <person name="Hunkapiller M.W."/>
            <person name="Myers E.W."/>
            <person name="Venter J.C."/>
        </authorList>
    </citation>
    <scope>NUCLEOTIDE SEQUENCE [LARGE SCALE GENOMIC DNA]</scope>
</reference>
<reference key="4">
    <citation type="journal article" date="2004" name="Genome Res.">
        <title>The status, quality, and expansion of the NIH full-length cDNA project: the Mammalian Gene Collection (MGC).</title>
        <authorList>
            <consortium name="The MGC Project Team"/>
        </authorList>
    </citation>
    <scope>NUCLEOTIDE SEQUENCE [LARGE SCALE MRNA]</scope>
    <source>
        <tissue>Skin</tissue>
    </source>
</reference>
<reference key="5">
    <citation type="journal article" date="2008" name="Proc. Natl. Acad. Sci. U.S.A.">
        <title>A quantitative atlas of mitotic phosphorylation.</title>
        <authorList>
            <person name="Dephoure N."/>
            <person name="Zhou C."/>
            <person name="Villen J."/>
            <person name="Beausoleil S.A."/>
            <person name="Bakalarski C.E."/>
            <person name="Elledge S.J."/>
            <person name="Gygi S.P."/>
        </authorList>
    </citation>
    <scope>IDENTIFICATION BY MASS SPECTROMETRY [LARGE SCALE ANALYSIS]</scope>
    <source>
        <tissue>Cervix carcinoma</tissue>
    </source>
</reference>
<reference key="6">
    <citation type="journal article" date="2010" name="Sci. Signal.">
        <title>Quantitative phosphoproteomics reveals widespread full phosphorylation site occupancy during mitosis.</title>
        <authorList>
            <person name="Olsen J.V."/>
            <person name="Vermeulen M."/>
            <person name="Santamaria A."/>
            <person name="Kumar C."/>
            <person name="Miller M.L."/>
            <person name="Jensen L.J."/>
            <person name="Gnad F."/>
            <person name="Cox J."/>
            <person name="Jensen T.S."/>
            <person name="Nigg E.A."/>
            <person name="Brunak S."/>
            <person name="Mann M."/>
        </authorList>
    </citation>
    <scope>PHOSPHORYLATION [LARGE SCALE ANALYSIS] AT SER-44</scope>
    <scope>IDENTIFICATION BY MASS SPECTROMETRY [LARGE SCALE ANALYSIS]</scope>
    <source>
        <tissue>Cervix carcinoma</tissue>
    </source>
</reference>
<reference key="7">
    <citation type="journal article" date="2011" name="Sci. Signal.">
        <title>System-wide temporal characterization of the proteome and phosphoproteome of human embryonic stem cell differentiation.</title>
        <authorList>
            <person name="Rigbolt K.T."/>
            <person name="Prokhorova T.A."/>
            <person name="Akimov V."/>
            <person name="Henningsen J."/>
            <person name="Johansen P.T."/>
            <person name="Kratchmarova I."/>
            <person name="Kassem M."/>
            <person name="Mann M."/>
            <person name="Olsen J.V."/>
            <person name="Blagoev B."/>
        </authorList>
    </citation>
    <scope>PHOSPHORYLATION [LARGE SCALE ANALYSIS] AT SER-44</scope>
    <scope>IDENTIFICATION BY MASS SPECTROMETRY [LARGE SCALE ANALYSIS]</scope>
</reference>
<reference key="8">
    <citation type="journal article" date="2013" name="J. Proteome Res.">
        <title>Toward a comprehensive characterization of a human cancer cell phosphoproteome.</title>
        <authorList>
            <person name="Zhou H."/>
            <person name="Di Palma S."/>
            <person name="Preisinger C."/>
            <person name="Peng M."/>
            <person name="Polat A.N."/>
            <person name="Heck A.J."/>
            <person name="Mohammed S."/>
        </authorList>
    </citation>
    <scope>PHOSPHORYLATION [LARGE SCALE ANALYSIS] AT SER-44</scope>
    <scope>IDENTIFICATION BY MASS SPECTROMETRY [LARGE SCALE ANALYSIS]</scope>
    <source>
        <tissue>Cervix carcinoma</tissue>
        <tissue>Erythroleukemia</tissue>
    </source>
</reference>
<reference key="9">
    <citation type="journal article" date="2017" name="Nat. Struct. Mol. Biol.">
        <title>Site-specific mapping of the human SUMO proteome reveals co-modification with phosphorylation.</title>
        <authorList>
            <person name="Hendriks I.A."/>
            <person name="Lyon D."/>
            <person name="Young C."/>
            <person name="Jensen L.J."/>
            <person name="Vertegaal A.C."/>
            <person name="Nielsen M.L."/>
        </authorList>
    </citation>
    <scope>SUMOYLATION [LARGE SCALE ANALYSIS] AT LYS-34</scope>
    <scope>IDENTIFICATION BY MASS SPECTROMETRY [LARGE SCALE ANALYSIS]</scope>
</reference>
<feature type="chain" id="PRO_0000251401" description="Zinc finger protein 740">
    <location>
        <begin position="1"/>
        <end position="193"/>
    </location>
</feature>
<feature type="zinc finger region" description="C2H2-type 1" evidence="1">
    <location>
        <begin position="101"/>
        <end position="123"/>
    </location>
</feature>
<feature type="zinc finger region" description="C2H2-type 2" evidence="1">
    <location>
        <begin position="129"/>
        <end position="151"/>
    </location>
</feature>
<feature type="zinc finger region" description="C2H2-type 3; atypical" evidence="1">
    <location>
        <begin position="157"/>
        <end position="179"/>
    </location>
</feature>
<feature type="region of interest" description="Disordered" evidence="2">
    <location>
        <begin position="33"/>
        <end position="75"/>
    </location>
</feature>
<feature type="compositionally biased region" description="Basic and acidic residues" evidence="2">
    <location>
        <begin position="55"/>
        <end position="69"/>
    </location>
</feature>
<feature type="modified residue" description="Phosphoserine" evidence="4 5 6">
    <location>
        <position position="44"/>
    </location>
</feature>
<feature type="cross-link" description="Glycyl lysine isopeptide (Lys-Gly) (interchain with G-Cter in SUMO2)" evidence="7">
    <location>
        <position position="34"/>
    </location>
</feature>
<organism>
    <name type="scientific">Homo sapiens</name>
    <name type="common">Human</name>
    <dbReference type="NCBI Taxonomy" id="9606"/>
    <lineage>
        <taxon>Eukaryota</taxon>
        <taxon>Metazoa</taxon>
        <taxon>Chordata</taxon>
        <taxon>Craniata</taxon>
        <taxon>Vertebrata</taxon>
        <taxon>Euteleostomi</taxon>
        <taxon>Mammalia</taxon>
        <taxon>Eutheria</taxon>
        <taxon>Euarchontoglires</taxon>
        <taxon>Primates</taxon>
        <taxon>Haplorrhini</taxon>
        <taxon>Catarrhini</taxon>
        <taxon>Hominidae</taxon>
        <taxon>Homo</taxon>
    </lineage>
</organism>
<accession>Q8NDX6</accession>
<accession>A8K9M9</accession>
<dbReference type="EMBL" id="AJ316575">
    <property type="protein sequence ID" value="CAC86954.1"/>
    <property type="molecule type" value="Genomic_DNA"/>
</dbReference>
<dbReference type="EMBL" id="AK292744">
    <property type="protein sequence ID" value="BAF85433.1"/>
    <property type="molecule type" value="mRNA"/>
</dbReference>
<dbReference type="EMBL" id="CH471054">
    <property type="protein sequence ID" value="EAW96673.1"/>
    <property type="molecule type" value="Genomic_DNA"/>
</dbReference>
<dbReference type="EMBL" id="BC053557">
    <property type="protein sequence ID" value="AAH53557.1"/>
    <property type="molecule type" value="mRNA"/>
</dbReference>
<dbReference type="CCDS" id="CCDS44896.1"/>
<dbReference type="RefSeq" id="NP_001004304.1">
    <property type="nucleotide sequence ID" value="NM_001004304.4"/>
</dbReference>
<dbReference type="SMR" id="Q8NDX6"/>
<dbReference type="BioGRID" id="129530">
    <property type="interactions" value="24"/>
</dbReference>
<dbReference type="FunCoup" id="Q8NDX6">
    <property type="interactions" value="749"/>
</dbReference>
<dbReference type="IntAct" id="Q8NDX6">
    <property type="interactions" value="7"/>
</dbReference>
<dbReference type="STRING" id="9606.ENSP00000409463"/>
<dbReference type="GlyGen" id="Q8NDX6">
    <property type="glycosylation" value="1 site, 1 O-linked glycan (1 site)"/>
</dbReference>
<dbReference type="iPTMnet" id="Q8NDX6"/>
<dbReference type="PhosphoSitePlus" id="Q8NDX6"/>
<dbReference type="BioMuta" id="ZNF740"/>
<dbReference type="DMDM" id="74760191"/>
<dbReference type="jPOST" id="Q8NDX6"/>
<dbReference type="MassIVE" id="Q8NDX6"/>
<dbReference type="PaxDb" id="9606-ENSP00000409463"/>
<dbReference type="PeptideAtlas" id="Q8NDX6"/>
<dbReference type="ProteomicsDB" id="73086"/>
<dbReference type="Pumba" id="Q8NDX6"/>
<dbReference type="Antibodypedia" id="48331">
    <property type="antibodies" value="55 antibodies from 15 providers"/>
</dbReference>
<dbReference type="DNASU" id="283337"/>
<dbReference type="Ensembl" id="ENST00000416904.5">
    <property type="protein sequence ID" value="ENSP00000409463.2"/>
    <property type="gene ID" value="ENSG00000139651.11"/>
</dbReference>
<dbReference type="GeneID" id="283337"/>
<dbReference type="KEGG" id="hsa:283337"/>
<dbReference type="MANE-Select" id="ENST00000416904.5">
    <property type="protein sequence ID" value="ENSP00000409463.2"/>
    <property type="RefSeq nucleotide sequence ID" value="NM_001004304.4"/>
    <property type="RefSeq protein sequence ID" value="NP_001004304.1"/>
</dbReference>
<dbReference type="UCSC" id="uc001scb.5">
    <property type="organism name" value="human"/>
</dbReference>
<dbReference type="AGR" id="HGNC:27465"/>
<dbReference type="CTD" id="283337"/>
<dbReference type="GeneCards" id="ZNF740"/>
<dbReference type="HGNC" id="HGNC:27465">
    <property type="gene designation" value="ZNF740"/>
</dbReference>
<dbReference type="HPA" id="ENSG00000139651">
    <property type="expression patterns" value="Low tissue specificity"/>
</dbReference>
<dbReference type="MIM" id="620976">
    <property type="type" value="gene"/>
</dbReference>
<dbReference type="neXtProt" id="NX_Q8NDX6"/>
<dbReference type="OpenTargets" id="ENSG00000139651"/>
<dbReference type="PharmGKB" id="PA143485686"/>
<dbReference type="VEuPathDB" id="HostDB:ENSG00000139651"/>
<dbReference type="eggNOG" id="KOG1721">
    <property type="taxonomic scope" value="Eukaryota"/>
</dbReference>
<dbReference type="GeneTree" id="ENSGT00940000159609"/>
<dbReference type="HOGENOM" id="CLU_093195_0_0_1"/>
<dbReference type="InParanoid" id="Q8NDX6"/>
<dbReference type="OMA" id="FICQHCF"/>
<dbReference type="OrthoDB" id="3437960at2759"/>
<dbReference type="PAN-GO" id="Q8NDX6">
    <property type="GO annotations" value="3 GO annotations based on evolutionary models"/>
</dbReference>
<dbReference type="PhylomeDB" id="Q8NDX6"/>
<dbReference type="PathwayCommons" id="Q8NDX6"/>
<dbReference type="Reactome" id="R-HSA-212436">
    <property type="pathway name" value="Generic Transcription Pathway"/>
</dbReference>
<dbReference type="SignaLink" id="Q8NDX6"/>
<dbReference type="BioGRID-ORCS" id="283337">
    <property type="hits" value="11 hits in 1180 CRISPR screens"/>
</dbReference>
<dbReference type="ChiTaRS" id="ZNF740">
    <property type="organism name" value="human"/>
</dbReference>
<dbReference type="GenomeRNAi" id="283337"/>
<dbReference type="Pharos" id="Q8NDX6">
    <property type="development level" value="Tbio"/>
</dbReference>
<dbReference type="PRO" id="PR:Q8NDX6"/>
<dbReference type="Proteomes" id="UP000005640">
    <property type="component" value="Chromosome 12"/>
</dbReference>
<dbReference type="RNAct" id="Q8NDX6">
    <property type="molecule type" value="protein"/>
</dbReference>
<dbReference type="Bgee" id="ENSG00000139651">
    <property type="expression patterns" value="Expressed in ileal mucosa and 156 other cell types or tissues"/>
</dbReference>
<dbReference type="GO" id="GO:0000785">
    <property type="term" value="C:chromatin"/>
    <property type="evidence" value="ECO:0000247"/>
    <property type="project" value="NTNU_SB"/>
</dbReference>
<dbReference type="GO" id="GO:0005634">
    <property type="term" value="C:nucleus"/>
    <property type="evidence" value="ECO:0007669"/>
    <property type="project" value="UniProtKB-SubCell"/>
</dbReference>
<dbReference type="GO" id="GO:0003700">
    <property type="term" value="F:DNA-binding transcription factor activity"/>
    <property type="evidence" value="ECO:0000318"/>
    <property type="project" value="GO_Central"/>
</dbReference>
<dbReference type="GO" id="GO:0000981">
    <property type="term" value="F:DNA-binding transcription factor activity, RNA polymerase II-specific"/>
    <property type="evidence" value="ECO:0000247"/>
    <property type="project" value="NTNU_SB"/>
</dbReference>
<dbReference type="GO" id="GO:0000978">
    <property type="term" value="F:RNA polymerase II cis-regulatory region sequence-specific DNA binding"/>
    <property type="evidence" value="ECO:0000318"/>
    <property type="project" value="GO_Central"/>
</dbReference>
<dbReference type="GO" id="GO:1990837">
    <property type="term" value="F:sequence-specific double-stranded DNA binding"/>
    <property type="evidence" value="ECO:0000314"/>
    <property type="project" value="ARUK-UCL"/>
</dbReference>
<dbReference type="GO" id="GO:0008270">
    <property type="term" value="F:zinc ion binding"/>
    <property type="evidence" value="ECO:0007669"/>
    <property type="project" value="UniProtKB-KW"/>
</dbReference>
<dbReference type="GO" id="GO:0006357">
    <property type="term" value="P:regulation of transcription by RNA polymerase II"/>
    <property type="evidence" value="ECO:0000318"/>
    <property type="project" value="GO_Central"/>
</dbReference>
<dbReference type="FunFam" id="3.30.160.60:FF:000460">
    <property type="entry name" value="Putative zinc finger protein 740"/>
    <property type="match status" value="1"/>
</dbReference>
<dbReference type="FunFam" id="3.30.160.60:FF:000042">
    <property type="entry name" value="Zinc finger protein 148"/>
    <property type="match status" value="1"/>
</dbReference>
<dbReference type="FunFam" id="3.30.160.60:FF:000230">
    <property type="entry name" value="Zinc finger protein 148"/>
    <property type="match status" value="1"/>
</dbReference>
<dbReference type="Gene3D" id="3.30.160.60">
    <property type="entry name" value="Classic Zinc Finger"/>
    <property type="match status" value="3"/>
</dbReference>
<dbReference type="InterPro" id="IPR036236">
    <property type="entry name" value="Znf_C2H2_sf"/>
</dbReference>
<dbReference type="InterPro" id="IPR013087">
    <property type="entry name" value="Znf_C2H2_type"/>
</dbReference>
<dbReference type="PANTHER" id="PTHR23235:SF155">
    <property type="entry name" value="EARLY GROWTH RESPONSE 4-RELATED"/>
    <property type="match status" value="1"/>
</dbReference>
<dbReference type="PANTHER" id="PTHR23235">
    <property type="entry name" value="KRUEPPEL-LIKE TRANSCRIPTION FACTOR"/>
    <property type="match status" value="1"/>
</dbReference>
<dbReference type="Pfam" id="PF00096">
    <property type="entry name" value="zf-C2H2"/>
    <property type="match status" value="2"/>
</dbReference>
<dbReference type="SMART" id="SM00355">
    <property type="entry name" value="ZnF_C2H2"/>
    <property type="match status" value="3"/>
</dbReference>
<dbReference type="SUPFAM" id="SSF57667">
    <property type="entry name" value="beta-beta-alpha zinc fingers"/>
    <property type="match status" value="2"/>
</dbReference>
<dbReference type="PROSITE" id="PS00028">
    <property type="entry name" value="ZINC_FINGER_C2H2_1"/>
    <property type="match status" value="2"/>
</dbReference>
<dbReference type="PROSITE" id="PS50157">
    <property type="entry name" value="ZINC_FINGER_C2H2_2"/>
    <property type="match status" value="3"/>
</dbReference>
<protein>
    <recommendedName>
        <fullName>Zinc finger protein 740</fullName>
    </recommendedName>
    <alternativeName>
        <fullName>OriLyt TD-element-binding protein 7</fullName>
    </alternativeName>
</protein>
<keyword id="KW-1017">Isopeptide bond</keyword>
<keyword id="KW-0479">Metal-binding</keyword>
<keyword id="KW-0539">Nucleus</keyword>
<keyword id="KW-0597">Phosphoprotein</keyword>
<keyword id="KW-1267">Proteomics identification</keyword>
<keyword id="KW-1185">Reference proteome</keyword>
<keyword id="KW-0677">Repeat</keyword>
<keyword id="KW-0804">Transcription</keyword>
<keyword id="KW-0805">Transcription regulation</keyword>
<keyword id="KW-0832">Ubl conjugation</keyword>
<keyword id="KW-0862">Zinc</keyword>
<keyword id="KW-0863">Zinc-finger</keyword>